<sequence>MKKIEAWLSKKGLKNKRTLIVVIAFVLFIIFLFLLLNSNSEDSGNITITENAELRTGPNAAYPVIYKVEKGDHFKKIGKVGKWIEVEDTSSNEKGWIAGWHTNLDIVADNTKEKNPLQGKTIVLDPGHGGSDQGASSNTKYKSLEKDYTLKTAKELQRTLEKEGATVKMTRTDDTYVSLENRDIKGDAYLSIHNDALESSNANGMTVYWYHDNQRALADTLDATIQKKGLLSNRGSRQENYQVLRQTKVPAVLLELGYISNPTDETMIKDQLHRQILEQAIVDGLKIYFSA</sequence>
<reference key="1">
    <citation type="book" date="2006" name="Gram positive pathogens, 2nd edition">
        <title>The Staphylococcus aureus NCTC 8325 genome.</title>
        <editorList>
            <person name="Fischetti V."/>
            <person name="Novick R."/>
            <person name="Ferretti J."/>
            <person name="Portnoy D."/>
            <person name="Rood J."/>
        </editorList>
        <authorList>
            <person name="Gillaspy A.F."/>
            <person name="Worrell V."/>
            <person name="Orvis J."/>
            <person name="Roe B.A."/>
            <person name="Dyer D.W."/>
            <person name="Iandolo J.J."/>
        </authorList>
    </citation>
    <scope>NUCLEOTIDE SEQUENCE [LARGE SCALE GENOMIC DNA]</scope>
    <source>
        <strain>NCTC 8325 / PS 47</strain>
    </source>
</reference>
<reference key="2">
    <citation type="journal article" date="2015" name="Appl. Microbiol. Biotechnol.">
        <title>Discovery of novel S. aureus autolysins and molecular engineering to enhance bacteriolytic activity.</title>
        <authorList>
            <person name="Osipovitch D.C."/>
            <person name="Therrien S."/>
            <person name="Griswold K.E."/>
        </authorList>
    </citation>
    <scope>PRELIMINARY FUNCTION</scope>
    <source>
        <strain>ATCC 35556 / SA113</strain>
    </source>
</reference>
<feature type="signal peptide" evidence="2">
    <location>
        <begin position="1"/>
        <end position="40"/>
    </location>
</feature>
<feature type="chain" id="PRO_0000245426" description="Probable cell wall amidase LytH">
    <location>
        <begin position="41"/>
        <end position="291"/>
    </location>
</feature>
<feature type="domain" description="SH3b" evidence="3">
    <location>
        <begin position="41"/>
        <end position="105"/>
    </location>
</feature>
<feature type="domain" description="MurNAc-LAA" evidence="6">
    <location>
        <begin position="122"/>
        <end position="286"/>
    </location>
</feature>
<feature type="region of interest" description="Disordered" evidence="4">
    <location>
        <begin position="118"/>
        <end position="140"/>
    </location>
</feature>
<feature type="strand" evidence="7">
    <location>
        <begin position="121"/>
        <end position="126"/>
    </location>
</feature>
<feature type="helix" evidence="7">
    <location>
        <begin position="145"/>
        <end position="162"/>
    </location>
</feature>
<feature type="strand" evidence="7">
    <location>
        <begin position="166"/>
        <end position="170"/>
    </location>
</feature>
<feature type="strand" evidence="7">
    <location>
        <begin position="172"/>
        <end position="174"/>
    </location>
</feature>
<feature type="helix" evidence="7">
    <location>
        <begin position="180"/>
        <end position="182"/>
    </location>
</feature>
<feature type="strand" evidence="7">
    <location>
        <begin position="187"/>
        <end position="193"/>
    </location>
</feature>
<feature type="strand" evidence="7">
    <location>
        <begin position="205"/>
        <end position="209"/>
    </location>
</feature>
<feature type="helix" evidence="7">
    <location>
        <begin position="212"/>
        <end position="214"/>
    </location>
</feature>
<feature type="helix" evidence="7">
    <location>
        <begin position="215"/>
        <end position="228"/>
    </location>
</feature>
<feature type="strand" evidence="7">
    <location>
        <begin position="233"/>
        <end position="238"/>
    </location>
</feature>
<feature type="helix" evidence="7">
    <location>
        <begin position="242"/>
        <end position="245"/>
    </location>
</feature>
<feature type="strand" evidence="7">
    <location>
        <begin position="251"/>
        <end position="257"/>
    </location>
</feature>
<feature type="helix" evidence="7">
    <location>
        <begin position="262"/>
        <end position="268"/>
    </location>
</feature>
<feature type="helix" evidence="7">
    <location>
        <begin position="271"/>
        <end position="288"/>
    </location>
</feature>
<proteinExistence type="evidence at protein level"/>
<evidence type="ECO:0000250" key="1">
    <source>
        <dbReference type="UniProtKB" id="O32421"/>
    </source>
</evidence>
<evidence type="ECO:0000255" key="2"/>
<evidence type="ECO:0000255" key="3">
    <source>
        <dbReference type="PROSITE-ProRule" id="PRU01117"/>
    </source>
</evidence>
<evidence type="ECO:0000256" key="4">
    <source>
        <dbReference type="SAM" id="MobiDB-lite"/>
    </source>
</evidence>
<evidence type="ECO:0000305" key="5"/>
<evidence type="ECO:0000305" key="6">
    <source>
    </source>
</evidence>
<evidence type="ECO:0007829" key="7">
    <source>
        <dbReference type="PDB" id="7TJ4"/>
    </source>
</evidence>
<dbReference type="EC" id="3.5.1.-" evidence="1"/>
<dbReference type="EMBL" id="CP000253">
    <property type="protein sequence ID" value="ABD30811.1"/>
    <property type="molecule type" value="Genomic_DNA"/>
</dbReference>
<dbReference type="RefSeq" id="WP_000717800.1">
    <property type="nucleotide sequence ID" value="NZ_LS483365.1"/>
</dbReference>
<dbReference type="RefSeq" id="YP_500247.1">
    <property type="nucleotide sequence ID" value="NC_007795.1"/>
</dbReference>
<dbReference type="PDB" id="7TJ4">
    <property type="method" value="X-ray"/>
    <property type="resolution" value="1.80 A"/>
    <property type="chains" value="B/D=117-291"/>
</dbReference>
<dbReference type="PDBsum" id="7TJ4"/>
<dbReference type="SMR" id="Q2FXU3"/>
<dbReference type="STRING" id="93061.SAOUHSC_01739"/>
<dbReference type="PaxDb" id="1280-SAXN108_1659"/>
<dbReference type="GeneID" id="3921088"/>
<dbReference type="KEGG" id="sao:SAOUHSC_01739"/>
<dbReference type="PATRIC" id="fig|93061.5.peg.1585"/>
<dbReference type="eggNOG" id="COG0860">
    <property type="taxonomic scope" value="Bacteria"/>
</dbReference>
<dbReference type="HOGENOM" id="CLU_014322_1_1_9"/>
<dbReference type="OrthoDB" id="9806267at2"/>
<dbReference type="PRO" id="PR:Q2FXU3"/>
<dbReference type="Proteomes" id="UP000008816">
    <property type="component" value="Chromosome"/>
</dbReference>
<dbReference type="GO" id="GO:0005576">
    <property type="term" value="C:extracellular region"/>
    <property type="evidence" value="ECO:0007669"/>
    <property type="project" value="UniProtKB-SubCell"/>
</dbReference>
<dbReference type="GO" id="GO:0030288">
    <property type="term" value="C:outer membrane-bounded periplasmic space"/>
    <property type="evidence" value="ECO:0000318"/>
    <property type="project" value="GO_Central"/>
</dbReference>
<dbReference type="GO" id="GO:0008745">
    <property type="term" value="F:N-acetylmuramoyl-L-alanine amidase activity"/>
    <property type="evidence" value="ECO:0000318"/>
    <property type="project" value="GO_Central"/>
</dbReference>
<dbReference type="GO" id="GO:0071555">
    <property type="term" value="P:cell wall organization"/>
    <property type="evidence" value="ECO:0007669"/>
    <property type="project" value="UniProtKB-KW"/>
</dbReference>
<dbReference type="GO" id="GO:0043093">
    <property type="term" value="P:FtsZ-dependent cytokinesis"/>
    <property type="evidence" value="ECO:0000318"/>
    <property type="project" value="GO_Central"/>
</dbReference>
<dbReference type="GO" id="GO:0009253">
    <property type="term" value="P:peptidoglycan catabolic process"/>
    <property type="evidence" value="ECO:0007669"/>
    <property type="project" value="InterPro"/>
</dbReference>
<dbReference type="CDD" id="cd02696">
    <property type="entry name" value="MurNAc-LAA"/>
    <property type="match status" value="1"/>
</dbReference>
<dbReference type="Gene3D" id="2.30.30.40">
    <property type="entry name" value="SH3 Domains"/>
    <property type="match status" value="1"/>
</dbReference>
<dbReference type="Gene3D" id="3.40.630.40">
    <property type="entry name" value="Zn-dependent exopeptidases"/>
    <property type="match status" value="1"/>
</dbReference>
<dbReference type="InterPro" id="IPR017273">
    <property type="entry name" value="LytH"/>
</dbReference>
<dbReference type="InterPro" id="IPR002508">
    <property type="entry name" value="MurNAc-LAA_cat"/>
</dbReference>
<dbReference type="InterPro" id="IPR050695">
    <property type="entry name" value="N-acetylmuramoyl_amidase_3"/>
</dbReference>
<dbReference type="InterPro" id="IPR003646">
    <property type="entry name" value="SH3-like_bac-type"/>
</dbReference>
<dbReference type="PANTHER" id="PTHR30404:SF7">
    <property type="entry name" value="CELL WALL AMIDASE LYTH-RELATED"/>
    <property type="match status" value="1"/>
</dbReference>
<dbReference type="PANTHER" id="PTHR30404">
    <property type="entry name" value="N-ACETYLMURAMOYL-L-ALANINE AMIDASE"/>
    <property type="match status" value="1"/>
</dbReference>
<dbReference type="Pfam" id="PF01520">
    <property type="entry name" value="Amidase_3"/>
    <property type="match status" value="1"/>
</dbReference>
<dbReference type="Pfam" id="PF08239">
    <property type="entry name" value="SH3_3"/>
    <property type="match status" value="1"/>
</dbReference>
<dbReference type="PIRSF" id="PIRSF037730">
    <property type="entry name" value="CWA_LytH_prd"/>
    <property type="match status" value="1"/>
</dbReference>
<dbReference type="SMART" id="SM00646">
    <property type="entry name" value="Ami_3"/>
    <property type="match status" value="1"/>
</dbReference>
<dbReference type="SMART" id="SM00287">
    <property type="entry name" value="SH3b"/>
    <property type="match status" value="1"/>
</dbReference>
<dbReference type="SUPFAM" id="SSF53187">
    <property type="entry name" value="Zn-dependent exopeptidases"/>
    <property type="match status" value="1"/>
</dbReference>
<dbReference type="PROSITE" id="PS51781">
    <property type="entry name" value="SH3B"/>
    <property type="match status" value="1"/>
</dbReference>
<name>LYTH_STAA8</name>
<accession>Q2FXU3</accession>
<keyword id="KW-0002">3D-structure</keyword>
<keyword id="KW-0961">Cell wall biogenesis/degradation</keyword>
<keyword id="KW-0378">Hydrolase</keyword>
<keyword id="KW-1185">Reference proteome</keyword>
<keyword id="KW-0964">Secreted</keyword>
<keyword id="KW-0732">Signal</keyword>
<gene>
    <name type="primary">lytH</name>
    <name type="ordered locus">SAOUHSC_01739</name>
</gene>
<protein>
    <recommendedName>
        <fullName evidence="1">Probable cell wall amidase LytH</fullName>
        <ecNumber evidence="1">3.5.1.-</ecNumber>
    </recommendedName>
</protein>
<comment type="function">
    <text evidence="1 6">Probably involved in cell-wall metabolism (By similarity). May have autolysin activity (PubMed:25690309).</text>
</comment>
<comment type="subcellular location">
    <subcellularLocation>
        <location evidence="5">Secreted</location>
    </subcellularLocation>
</comment>
<comment type="similarity">
    <text evidence="5">Belongs to the N-acetylmuramoyl-L-alanine amidase 3 family.</text>
</comment>
<organism>
    <name type="scientific">Staphylococcus aureus (strain NCTC 8325 / PS 47)</name>
    <dbReference type="NCBI Taxonomy" id="93061"/>
    <lineage>
        <taxon>Bacteria</taxon>
        <taxon>Bacillati</taxon>
        <taxon>Bacillota</taxon>
        <taxon>Bacilli</taxon>
        <taxon>Bacillales</taxon>
        <taxon>Staphylococcaceae</taxon>
        <taxon>Staphylococcus</taxon>
    </lineage>
</organism>